<feature type="chain" id="PRO_0000169746" description="Putative acid--amine ligase YjfC">
    <location>
        <begin position="1"/>
        <end position="387"/>
    </location>
</feature>
<feature type="binding site" evidence="1">
    <location>
        <begin position="101"/>
        <end position="103"/>
    </location>
    <ligand>
        <name>ATP</name>
        <dbReference type="ChEBI" id="CHEBI:30616"/>
    </ligand>
</feature>
<feature type="binding site" evidence="1">
    <location>
        <position position="103"/>
    </location>
    <ligand>
        <name>Mg(2+)</name>
        <dbReference type="ChEBI" id="CHEBI:18420"/>
        <label>1</label>
    </ligand>
</feature>
<feature type="binding site" evidence="1">
    <location>
        <position position="116"/>
    </location>
    <ligand>
        <name>Mg(2+)</name>
        <dbReference type="ChEBI" id="CHEBI:18420"/>
        <label>1</label>
    </ligand>
</feature>
<feature type="binding site" evidence="1">
    <location>
        <position position="116"/>
    </location>
    <ligand>
        <name>Mg(2+)</name>
        <dbReference type="ChEBI" id="CHEBI:18420"/>
        <label>2</label>
    </ligand>
</feature>
<feature type="binding site" evidence="1">
    <location>
        <position position="118"/>
    </location>
    <ligand>
        <name>Mg(2+)</name>
        <dbReference type="ChEBI" id="CHEBI:18420"/>
        <label>2</label>
    </ligand>
</feature>
<feature type="binding site" evidence="1">
    <location>
        <position position="265"/>
    </location>
    <ligand>
        <name>ATP</name>
        <dbReference type="ChEBI" id="CHEBI:30616"/>
    </ligand>
</feature>
<feature type="binding site" evidence="1">
    <location>
        <position position="302"/>
    </location>
    <ligand>
        <name>ATP</name>
        <dbReference type="ChEBI" id="CHEBI:30616"/>
    </ligand>
</feature>
<feature type="binding site" evidence="1">
    <location>
        <position position="309"/>
    </location>
    <ligand>
        <name>ATP</name>
        <dbReference type="ChEBI" id="CHEBI:30616"/>
    </ligand>
</feature>
<feature type="binding site" evidence="1">
    <location>
        <position position="337"/>
    </location>
    <ligand>
        <name>ATP</name>
        <dbReference type="ChEBI" id="CHEBI:30616"/>
    </ligand>
</feature>
<feature type="binding site" evidence="1">
    <location>
        <begin position="372"/>
        <end position="374"/>
    </location>
    <ligand>
        <name>ATP</name>
        <dbReference type="ChEBI" id="CHEBI:30616"/>
    </ligand>
</feature>
<feature type="site" description="Transition state stabilizer" evidence="1">
    <location>
        <position position="101"/>
    </location>
</feature>
<feature type="strand" evidence="4">
    <location>
        <begin position="2"/>
        <end position="5"/>
    </location>
</feature>
<feature type="helix" evidence="4">
    <location>
        <begin position="12"/>
        <end position="18"/>
    </location>
</feature>
<feature type="strand" evidence="4">
    <location>
        <begin position="24"/>
        <end position="26"/>
    </location>
</feature>
<feature type="strand" evidence="4">
    <location>
        <begin position="36"/>
        <end position="40"/>
    </location>
</feature>
<feature type="helix" evidence="4">
    <location>
        <begin position="42"/>
        <end position="48"/>
    </location>
</feature>
<feature type="helix" evidence="4">
    <location>
        <begin position="50"/>
        <end position="67"/>
    </location>
</feature>
<feature type="helix" evidence="4">
    <location>
        <begin position="71"/>
        <end position="76"/>
    </location>
</feature>
<feature type="helix" evidence="4">
    <location>
        <begin position="81"/>
        <end position="83"/>
    </location>
</feature>
<feature type="helix" evidence="4">
    <location>
        <begin position="84"/>
        <end position="92"/>
    </location>
</feature>
<feature type="strand" evidence="4">
    <location>
        <begin position="99"/>
        <end position="105"/>
    </location>
</feature>
<feature type="strand" evidence="4">
    <location>
        <begin position="113"/>
        <end position="118"/>
    </location>
</feature>
<feature type="helix" evidence="4">
    <location>
        <begin position="125"/>
        <end position="129"/>
    </location>
</feature>
<feature type="helix" evidence="4">
    <location>
        <begin position="131"/>
        <end position="141"/>
    </location>
</feature>
<feature type="helix" evidence="4">
    <location>
        <begin position="155"/>
        <end position="165"/>
    </location>
</feature>
<feature type="strand" evidence="4">
    <location>
        <begin position="172"/>
        <end position="176"/>
    </location>
</feature>
<feature type="helix" evidence="4">
    <location>
        <begin position="181"/>
        <end position="196"/>
    </location>
</feature>
<feature type="strand" evidence="4">
    <location>
        <begin position="201"/>
        <end position="205"/>
    </location>
</feature>
<feature type="helix" evidence="4">
    <location>
        <begin position="206"/>
        <end position="208"/>
    </location>
</feature>
<feature type="strand" evidence="4">
    <location>
        <begin position="210"/>
        <end position="212"/>
    </location>
</feature>
<feature type="turn" evidence="4">
    <location>
        <begin position="213"/>
        <end position="215"/>
    </location>
</feature>
<feature type="strand" evidence="4">
    <location>
        <begin position="216"/>
        <end position="218"/>
    </location>
</feature>
<feature type="strand" evidence="4">
    <location>
        <begin position="227"/>
        <end position="232"/>
    </location>
</feature>
<feature type="helix" evidence="4">
    <location>
        <begin position="234"/>
        <end position="239"/>
    </location>
</feature>
<feature type="helix" evidence="4">
    <location>
        <begin position="243"/>
        <end position="248"/>
    </location>
</feature>
<feature type="strand" evidence="4">
    <location>
        <begin position="251"/>
        <end position="255"/>
    </location>
</feature>
<feature type="helix" evidence="4">
    <location>
        <begin position="257"/>
        <end position="259"/>
    </location>
</feature>
<feature type="helix" evidence="4">
    <location>
        <begin position="260"/>
        <end position="263"/>
    </location>
</feature>
<feature type="helix" evidence="4">
    <location>
        <begin position="267"/>
        <end position="274"/>
    </location>
</feature>
<feature type="strand" evidence="4">
    <location>
        <begin position="284"/>
        <end position="286"/>
    </location>
</feature>
<feature type="strand" evidence="4">
    <location>
        <begin position="299"/>
        <end position="305"/>
    </location>
</feature>
<feature type="turn" evidence="4">
    <location>
        <begin position="308"/>
        <end position="311"/>
    </location>
</feature>
<feature type="strand" evidence="4">
    <location>
        <begin position="313"/>
        <end position="315"/>
    </location>
</feature>
<feature type="strand" evidence="4">
    <location>
        <begin position="321"/>
        <end position="324"/>
    </location>
</feature>
<feature type="strand" evidence="4">
    <location>
        <begin position="334"/>
        <end position="338"/>
    </location>
</feature>
<feature type="strand" evidence="4">
    <location>
        <begin position="348"/>
        <end position="357"/>
    </location>
</feature>
<feature type="strand" evidence="4">
    <location>
        <begin position="360"/>
        <end position="373"/>
    </location>
</feature>
<feature type="strand" evidence="4">
    <location>
        <begin position="379"/>
        <end position="381"/>
    </location>
</feature>
<feature type="strand" evidence="4">
    <location>
        <begin position="383"/>
        <end position="385"/>
    </location>
</feature>
<comment type="function">
    <text evidence="2">May be a ligase forming an amide bond. Shows ATPase activity. Despite its similarity to the C-terminal synthetase domain of Gss, is not a glutathionylspermidine (Gsp) synthetase. Cannot synthesize Gsp, glutathione (GSH), or GSH intermediates, from GSH and spermidine, cysteine and glutamate, gamma-glutamylcysteine and spermidine, and gamma-glutamylcysteine and glycine. Does not bind to Gsp.</text>
</comment>
<comment type="disruption phenotype">
    <text evidence="2">Deletion of this gene does not affect the ability to synthesize glutathionylspermidine. There is no visible differences between wild-type and mutant strain growth in LB media.</text>
</comment>
<comment type="similarity">
    <text evidence="3">Belongs to the glutathionylspermidine synthase preATP-grasp family.</text>
</comment>
<proteinExistence type="evidence at protein level"/>
<gene>
    <name type="primary">yjfC</name>
    <name type="ordered locus">b4186</name>
    <name type="ordered locus">JW4144</name>
</gene>
<accession>P33222</accession>
<accession>Q2M6B9</accession>
<name>YJFC_ECOLI</name>
<reference key="1">
    <citation type="journal article" date="1995" name="Nucleic Acids Res.">
        <title>Analysis of the Escherichia coli genome VI: DNA sequence of the region from 92.8 through 100 minutes.</title>
        <authorList>
            <person name="Burland V.D."/>
            <person name="Plunkett G. III"/>
            <person name="Sofia H.J."/>
            <person name="Daniels D.L."/>
            <person name="Blattner F.R."/>
        </authorList>
    </citation>
    <scope>NUCLEOTIDE SEQUENCE [LARGE SCALE GENOMIC DNA]</scope>
    <source>
        <strain>K12 / MG1655 / ATCC 47076</strain>
    </source>
</reference>
<reference key="2">
    <citation type="journal article" date="1997" name="Science">
        <title>The complete genome sequence of Escherichia coli K-12.</title>
        <authorList>
            <person name="Blattner F.R."/>
            <person name="Plunkett G. III"/>
            <person name="Bloch C.A."/>
            <person name="Perna N.T."/>
            <person name="Burland V."/>
            <person name="Riley M."/>
            <person name="Collado-Vides J."/>
            <person name="Glasner J.D."/>
            <person name="Rode C.K."/>
            <person name="Mayhew G.F."/>
            <person name="Gregor J."/>
            <person name="Davis N.W."/>
            <person name="Kirkpatrick H.A."/>
            <person name="Goeden M.A."/>
            <person name="Rose D.J."/>
            <person name="Mau B."/>
            <person name="Shao Y."/>
        </authorList>
    </citation>
    <scope>NUCLEOTIDE SEQUENCE [LARGE SCALE GENOMIC DNA]</scope>
    <source>
        <strain>K12 / MG1655 / ATCC 47076</strain>
    </source>
</reference>
<reference key="3">
    <citation type="journal article" date="2006" name="Mol. Syst. Biol.">
        <title>Highly accurate genome sequences of Escherichia coli K-12 strains MG1655 and W3110.</title>
        <authorList>
            <person name="Hayashi K."/>
            <person name="Morooka N."/>
            <person name="Yamamoto Y."/>
            <person name="Fujita K."/>
            <person name="Isono K."/>
            <person name="Choi S."/>
            <person name="Ohtsubo E."/>
            <person name="Baba T."/>
            <person name="Wanner B.L."/>
            <person name="Mori H."/>
            <person name="Horiuchi T."/>
        </authorList>
    </citation>
    <scope>NUCLEOTIDE SEQUENCE [LARGE SCALE GENOMIC DNA]</scope>
    <source>
        <strain>K12 / W3110 / ATCC 27325 / DSM 5911</strain>
    </source>
</reference>
<reference key="4">
    <citation type="journal article" date="1994" name="J. Bacteriol.">
        <title>Structure and transcriptional regulation of the Escherichia coli adaptive response gene aidB.</title>
        <authorList>
            <person name="Landini P."/>
            <person name="Hajec L.I."/>
            <person name="Volkert M.R."/>
        </authorList>
    </citation>
    <scope>NUCLEOTIDE SEQUENCE [GENOMIC DNA] OF 208-387</scope>
    <source>
        <strain>K12</strain>
    </source>
</reference>
<reference key="5">
    <citation type="journal article" date="2012" name="Int. J. Biochem. Mol. Biol.">
        <title>Comparison of the functions of glutathionylspermidine synthetase/amidase from E. coli and its predicted homologues YgiC and YjfC.</title>
        <authorList>
            <person name="Sui L."/>
            <person name="Warren J.C."/>
            <person name="Russell J.P."/>
            <person name="Stourman N.V."/>
        </authorList>
    </citation>
    <scope>LACK OF GLUTATHIONYLSPERMIDINE SYNTHETASE ACTIVITY</scope>
    <scope>FUNCTION</scope>
    <scope>ATP-BINDING</scope>
    <scope>DISRUPTION PHENOTYPE</scope>
    <source>
        <strain>K12</strain>
    </source>
</reference>
<protein>
    <recommendedName>
        <fullName>Putative acid--amine ligase YjfC</fullName>
        <ecNumber>6.3.1.-</ecNumber>
    </recommendedName>
</protein>
<evidence type="ECO:0000250" key="1"/>
<evidence type="ECO:0000269" key="2">
    <source>
    </source>
</evidence>
<evidence type="ECO:0000305" key="3"/>
<evidence type="ECO:0007829" key="4">
    <source>
        <dbReference type="PDB" id="7UK6"/>
    </source>
</evidence>
<sequence length="387" mass="45020">MLRHNVPVRRDLDQIAADNGFDFHIIDNEIYWDESRAYRFTLRQIEEQIEKPTAELHQMCLEVVDRAVKDEEILTQLAIPPLYWDVIAESWRARDPSLYGRMDFAWCGNAPVKLLEYNADTPTSLYESAYFQWLWLEDARRSGIIPRDADQYNAIQERLISRFSELYSREPFYFCCCQDTDEDRSTVLYLQDCAQQAGQESRFIYIEDLGLGVGGVLTDLDDNVIQRAFKLYPLEWMMRDDNGPLLRKRREQWVEPLWKSILSNKGLMPLLWRFFPGHPNLLASWFDGEKPQIAAGESYVRKPIYSREGGNVTIFDGKNNVVDHADGDYADEPMIYQAFQPLPRFGDSYTLIGSWIVDDEACGMGIREDNTLITKDTSRFVPHYIAG</sequence>
<dbReference type="EC" id="6.3.1.-"/>
<dbReference type="EMBL" id="U14003">
    <property type="protein sequence ID" value="AAA97082.1"/>
    <property type="molecule type" value="Genomic_DNA"/>
</dbReference>
<dbReference type="EMBL" id="U00096">
    <property type="protein sequence ID" value="AAC77143.1"/>
    <property type="molecule type" value="Genomic_DNA"/>
</dbReference>
<dbReference type="EMBL" id="AP009048">
    <property type="protein sequence ID" value="BAE78187.1"/>
    <property type="molecule type" value="Genomic_DNA"/>
</dbReference>
<dbReference type="EMBL" id="L20915">
    <property type="protein sequence ID" value="AAC18888.1"/>
    <property type="molecule type" value="Genomic_DNA"/>
</dbReference>
<dbReference type="PIR" id="S56411">
    <property type="entry name" value="S56411"/>
</dbReference>
<dbReference type="RefSeq" id="NP_418607.1">
    <property type="nucleotide sequence ID" value="NC_000913.3"/>
</dbReference>
<dbReference type="RefSeq" id="WP_000943959.1">
    <property type="nucleotide sequence ID" value="NZ_LN832404.1"/>
</dbReference>
<dbReference type="PDB" id="7UK6">
    <property type="method" value="X-ray"/>
    <property type="resolution" value="1.90 A"/>
    <property type="chains" value="A=1-387"/>
</dbReference>
<dbReference type="PDB" id="7UK7">
    <property type="method" value="X-ray"/>
    <property type="resolution" value="1.95 A"/>
    <property type="chains" value="A=1-387"/>
</dbReference>
<dbReference type="PDBsum" id="7UK6"/>
<dbReference type="PDBsum" id="7UK7"/>
<dbReference type="SMR" id="P33222"/>
<dbReference type="BioGRID" id="4263212">
    <property type="interactions" value="5"/>
</dbReference>
<dbReference type="FunCoup" id="P33222">
    <property type="interactions" value="195"/>
</dbReference>
<dbReference type="IntAct" id="P33222">
    <property type="interactions" value="1"/>
</dbReference>
<dbReference type="STRING" id="511145.b4186"/>
<dbReference type="PaxDb" id="511145-b4186"/>
<dbReference type="EnsemblBacteria" id="AAC77143">
    <property type="protein sequence ID" value="AAC77143"/>
    <property type="gene ID" value="b4186"/>
</dbReference>
<dbReference type="GeneID" id="948699"/>
<dbReference type="KEGG" id="ecj:JW4144"/>
<dbReference type="KEGG" id="eco:b4186"/>
<dbReference type="KEGG" id="ecoc:C3026_22615"/>
<dbReference type="PATRIC" id="fig|1411691.4.peg.2515"/>
<dbReference type="EchoBASE" id="EB1760"/>
<dbReference type="eggNOG" id="COG0754">
    <property type="taxonomic scope" value="Bacteria"/>
</dbReference>
<dbReference type="HOGENOM" id="CLU_059175_0_0_6"/>
<dbReference type="InParanoid" id="P33222"/>
<dbReference type="OMA" id="DEIYWDE"/>
<dbReference type="OrthoDB" id="9765517at2"/>
<dbReference type="PhylomeDB" id="P33222"/>
<dbReference type="BioCyc" id="EcoCyc:EG11812-MONOMER"/>
<dbReference type="PRO" id="PR:P33222"/>
<dbReference type="Proteomes" id="UP000000625">
    <property type="component" value="Chromosome"/>
</dbReference>
<dbReference type="GO" id="GO:0005524">
    <property type="term" value="F:ATP binding"/>
    <property type="evidence" value="ECO:0007669"/>
    <property type="project" value="UniProtKB-KW"/>
</dbReference>
<dbReference type="GO" id="GO:0016874">
    <property type="term" value="F:ligase activity"/>
    <property type="evidence" value="ECO:0000318"/>
    <property type="project" value="GO_Central"/>
</dbReference>
<dbReference type="GO" id="GO:0046872">
    <property type="term" value="F:metal ion binding"/>
    <property type="evidence" value="ECO:0007669"/>
    <property type="project" value="UniProtKB-KW"/>
</dbReference>
<dbReference type="Gene3D" id="3.30.1490.330">
    <property type="match status" value="1"/>
</dbReference>
<dbReference type="InterPro" id="IPR005494">
    <property type="entry name" value="GSPS_pre-ATP-grasp-like_dom"/>
</dbReference>
<dbReference type="InterPro" id="IPR016185">
    <property type="entry name" value="PreATP-grasp_dom_sf"/>
</dbReference>
<dbReference type="Pfam" id="PF03738">
    <property type="entry name" value="GSP_synth"/>
    <property type="match status" value="1"/>
</dbReference>
<dbReference type="SUPFAM" id="SSF56059">
    <property type="entry name" value="Glutathione synthetase ATP-binding domain-like"/>
    <property type="match status" value="1"/>
</dbReference>
<dbReference type="SUPFAM" id="SSF52440">
    <property type="entry name" value="PreATP-grasp domain"/>
    <property type="match status" value="1"/>
</dbReference>
<organism>
    <name type="scientific">Escherichia coli (strain K12)</name>
    <dbReference type="NCBI Taxonomy" id="83333"/>
    <lineage>
        <taxon>Bacteria</taxon>
        <taxon>Pseudomonadati</taxon>
        <taxon>Pseudomonadota</taxon>
        <taxon>Gammaproteobacteria</taxon>
        <taxon>Enterobacterales</taxon>
        <taxon>Enterobacteriaceae</taxon>
        <taxon>Escherichia</taxon>
    </lineage>
</organism>
<keyword id="KW-0002">3D-structure</keyword>
<keyword id="KW-0067">ATP-binding</keyword>
<keyword id="KW-0436">Ligase</keyword>
<keyword id="KW-0460">Magnesium</keyword>
<keyword id="KW-0479">Metal-binding</keyword>
<keyword id="KW-0547">Nucleotide-binding</keyword>
<keyword id="KW-1185">Reference proteome</keyword>